<keyword id="KW-0067">ATP-binding</keyword>
<keyword id="KW-0414">Isoprene biosynthesis</keyword>
<keyword id="KW-0418">Kinase</keyword>
<keyword id="KW-0547">Nucleotide-binding</keyword>
<keyword id="KW-0808">Transferase</keyword>
<organism>
    <name type="scientific">Burkholderia orbicola (strain MC0-3)</name>
    <dbReference type="NCBI Taxonomy" id="406425"/>
    <lineage>
        <taxon>Bacteria</taxon>
        <taxon>Pseudomonadati</taxon>
        <taxon>Pseudomonadota</taxon>
        <taxon>Betaproteobacteria</taxon>
        <taxon>Burkholderiales</taxon>
        <taxon>Burkholderiaceae</taxon>
        <taxon>Burkholderia</taxon>
        <taxon>Burkholderia cepacia complex</taxon>
        <taxon>Burkholderia orbicola</taxon>
    </lineage>
</organism>
<proteinExistence type="inferred from homology"/>
<accession>B1JYP8</accession>
<comment type="function">
    <text evidence="1">Catalyzes the phosphorylation of the position 2 hydroxy group of 4-diphosphocytidyl-2C-methyl-D-erythritol.</text>
</comment>
<comment type="catalytic activity">
    <reaction evidence="1">
        <text>4-CDP-2-C-methyl-D-erythritol + ATP = 4-CDP-2-C-methyl-D-erythritol 2-phosphate + ADP + H(+)</text>
        <dbReference type="Rhea" id="RHEA:18437"/>
        <dbReference type="ChEBI" id="CHEBI:15378"/>
        <dbReference type="ChEBI" id="CHEBI:30616"/>
        <dbReference type="ChEBI" id="CHEBI:57823"/>
        <dbReference type="ChEBI" id="CHEBI:57919"/>
        <dbReference type="ChEBI" id="CHEBI:456216"/>
        <dbReference type="EC" id="2.7.1.148"/>
    </reaction>
</comment>
<comment type="pathway">
    <text evidence="1">Isoprenoid biosynthesis; isopentenyl diphosphate biosynthesis via DXP pathway; isopentenyl diphosphate from 1-deoxy-D-xylulose 5-phosphate: step 3/6.</text>
</comment>
<comment type="similarity">
    <text evidence="1">Belongs to the GHMP kinase family. IspE subfamily.</text>
</comment>
<protein>
    <recommendedName>
        <fullName evidence="1">4-diphosphocytidyl-2-C-methyl-D-erythritol kinase</fullName>
        <shortName evidence="1">CMK</shortName>
        <ecNumber evidence="1">2.7.1.148</ecNumber>
    </recommendedName>
    <alternativeName>
        <fullName evidence="1">4-(cytidine-5'-diphospho)-2-C-methyl-D-erythritol kinase</fullName>
    </alternativeName>
</protein>
<reference key="1">
    <citation type="submission" date="2008-02" db="EMBL/GenBank/DDBJ databases">
        <title>Complete sequence of chromosome 1 of Burkholderia cenocepacia MC0-3.</title>
        <authorList>
            <person name="Copeland A."/>
            <person name="Lucas S."/>
            <person name="Lapidus A."/>
            <person name="Barry K."/>
            <person name="Bruce D."/>
            <person name="Goodwin L."/>
            <person name="Glavina del Rio T."/>
            <person name="Dalin E."/>
            <person name="Tice H."/>
            <person name="Pitluck S."/>
            <person name="Chain P."/>
            <person name="Malfatti S."/>
            <person name="Shin M."/>
            <person name="Vergez L."/>
            <person name="Schmutz J."/>
            <person name="Larimer F."/>
            <person name="Land M."/>
            <person name="Hauser L."/>
            <person name="Kyrpides N."/>
            <person name="Mikhailova N."/>
            <person name="Tiedje J."/>
            <person name="Richardson P."/>
        </authorList>
    </citation>
    <scope>NUCLEOTIDE SEQUENCE [LARGE SCALE GENOMIC DNA]</scope>
    <source>
        <strain>MC0-3</strain>
    </source>
</reference>
<evidence type="ECO:0000255" key="1">
    <source>
        <dbReference type="HAMAP-Rule" id="MF_00061"/>
    </source>
</evidence>
<sequence length="293" mass="31970">MTDSTRSLRNCLAPAKLNLFLHITGRRPNGYHDLQSVFQLLNWGDTLHFTLRDDGRVARVTDVPGVPEESDLVVRAANLLKAHTGTAHGVDVEIDKILPMGAGLGGGSSDAATTLLALNRLWQLDLPRAELQSLAVKLGADVPFFIFGKNAFAEGIGEELAEVELPTRWFLVVTPRVHVPTAEIFSDELLTRDTKPVTIADFLAQQTSDAEWPDSFGRNDMQEVVTRKYAEVAQVVKWLYDVTPARMTGSGASVFAAFHSKHEAEAAKAKLPASWNGAVAESLNEHPLFAFAS</sequence>
<dbReference type="EC" id="2.7.1.148" evidence="1"/>
<dbReference type="EMBL" id="CP000958">
    <property type="protein sequence ID" value="ACA91971.1"/>
    <property type="molecule type" value="Genomic_DNA"/>
</dbReference>
<dbReference type="RefSeq" id="WP_012329246.1">
    <property type="nucleotide sequence ID" value="NC_010508.1"/>
</dbReference>
<dbReference type="SMR" id="B1JYP8"/>
<dbReference type="GeneID" id="83049596"/>
<dbReference type="KEGG" id="bcm:Bcenmc03_2812"/>
<dbReference type="HOGENOM" id="CLU_053057_3_0_4"/>
<dbReference type="UniPathway" id="UPA00056">
    <property type="reaction ID" value="UER00094"/>
</dbReference>
<dbReference type="Proteomes" id="UP000002169">
    <property type="component" value="Chromosome 1"/>
</dbReference>
<dbReference type="GO" id="GO:0050515">
    <property type="term" value="F:4-(cytidine 5'-diphospho)-2-C-methyl-D-erythritol kinase activity"/>
    <property type="evidence" value="ECO:0007669"/>
    <property type="project" value="UniProtKB-UniRule"/>
</dbReference>
<dbReference type="GO" id="GO:0005524">
    <property type="term" value="F:ATP binding"/>
    <property type="evidence" value="ECO:0007669"/>
    <property type="project" value="UniProtKB-UniRule"/>
</dbReference>
<dbReference type="GO" id="GO:0019288">
    <property type="term" value="P:isopentenyl diphosphate biosynthetic process, methylerythritol 4-phosphate pathway"/>
    <property type="evidence" value="ECO:0007669"/>
    <property type="project" value="UniProtKB-UniRule"/>
</dbReference>
<dbReference type="GO" id="GO:0016114">
    <property type="term" value="P:terpenoid biosynthetic process"/>
    <property type="evidence" value="ECO:0007669"/>
    <property type="project" value="InterPro"/>
</dbReference>
<dbReference type="Gene3D" id="3.30.230.10">
    <property type="match status" value="1"/>
</dbReference>
<dbReference type="Gene3D" id="3.30.70.890">
    <property type="entry name" value="GHMP kinase, C-terminal domain"/>
    <property type="match status" value="1"/>
</dbReference>
<dbReference type="HAMAP" id="MF_00061">
    <property type="entry name" value="IspE"/>
    <property type="match status" value="1"/>
</dbReference>
<dbReference type="InterPro" id="IPR013750">
    <property type="entry name" value="GHMP_kinase_C_dom"/>
</dbReference>
<dbReference type="InterPro" id="IPR036554">
    <property type="entry name" value="GHMP_kinase_C_sf"/>
</dbReference>
<dbReference type="InterPro" id="IPR006204">
    <property type="entry name" value="GHMP_kinase_N_dom"/>
</dbReference>
<dbReference type="InterPro" id="IPR004424">
    <property type="entry name" value="IspE"/>
</dbReference>
<dbReference type="InterPro" id="IPR020568">
    <property type="entry name" value="Ribosomal_Su5_D2-typ_SF"/>
</dbReference>
<dbReference type="InterPro" id="IPR014721">
    <property type="entry name" value="Ribsml_uS5_D2-typ_fold_subgr"/>
</dbReference>
<dbReference type="NCBIfam" id="TIGR00154">
    <property type="entry name" value="ispE"/>
    <property type="match status" value="1"/>
</dbReference>
<dbReference type="NCBIfam" id="NF011202">
    <property type="entry name" value="PRK14608.1"/>
    <property type="match status" value="1"/>
</dbReference>
<dbReference type="PANTHER" id="PTHR43527">
    <property type="entry name" value="4-DIPHOSPHOCYTIDYL-2-C-METHYL-D-ERYTHRITOL KINASE, CHLOROPLASTIC"/>
    <property type="match status" value="1"/>
</dbReference>
<dbReference type="PANTHER" id="PTHR43527:SF2">
    <property type="entry name" value="4-DIPHOSPHOCYTIDYL-2-C-METHYL-D-ERYTHRITOL KINASE, CHLOROPLASTIC"/>
    <property type="match status" value="1"/>
</dbReference>
<dbReference type="Pfam" id="PF08544">
    <property type="entry name" value="GHMP_kinases_C"/>
    <property type="match status" value="1"/>
</dbReference>
<dbReference type="Pfam" id="PF00288">
    <property type="entry name" value="GHMP_kinases_N"/>
    <property type="match status" value="1"/>
</dbReference>
<dbReference type="PIRSF" id="PIRSF010376">
    <property type="entry name" value="IspE"/>
    <property type="match status" value="1"/>
</dbReference>
<dbReference type="SUPFAM" id="SSF55060">
    <property type="entry name" value="GHMP Kinase, C-terminal domain"/>
    <property type="match status" value="1"/>
</dbReference>
<dbReference type="SUPFAM" id="SSF54211">
    <property type="entry name" value="Ribosomal protein S5 domain 2-like"/>
    <property type="match status" value="1"/>
</dbReference>
<gene>
    <name evidence="1" type="primary">ispE</name>
    <name type="ordered locus">Bcenmc03_2812</name>
</gene>
<name>ISPE_BURO0</name>
<feature type="chain" id="PRO_1000092065" description="4-diphosphocytidyl-2-C-methyl-D-erythritol kinase">
    <location>
        <begin position="1"/>
        <end position="293"/>
    </location>
</feature>
<feature type="active site" evidence="1">
    <location>
        <position position="16"/>
    </location>
</feature>
<feature type="active site" evidence="1">
    <location>
        <position position="141"/>
    </location>
</feature>
<feature type="binding site" evidence="1">
    <location>
        <begin position="99"/>
        <end position="109"/>
    </location>
    <ligand>
        <name>ATP</name>
        <dbReference type="ChEBI" id="CHEBI:30616"/>
    </ligand>
</feature>